<name>RS3_PROM5</name>
<dbReference type="EMBL" id="CP000552">
    <property type="protein sequence ID" value="ABM72941.1"/>
    <property type="molecule type" value="Genomic_DNA"/>
</dbReference>
<dbReference type="RefSeq" id="WP_011821031.1">
    <property type="nucleotide sequence ID" value="NC_008817.1"/>
</dbReference>
<dbReference type="SMR" id="A2BYT0"/>
<dbReference type="STRING" id="167542.P9515_17341"/>
<dbReference type="GeneID" id="60200821"/>
<dbReference type="KEGG" id="pmc:P9515_17341"/>
<dbReference type="eggNOG" id="COG0092">
    <property type="taxonomic scope" value="Bacteria"/>
</dbReference>
<dbReference type="HOGENOM" id="CLU_058591_0_2_3"/>
<dbReference type="OrthoDB" id="9806396at2"/>
<dbReference type="Proteomes" id="UP000001589">
    <property type="component" value="Chromosome"/>
</dbReference>
<dbReference type="GO" id="GO:0022627">
    <property type="term" value="C:cytosolic small ribosomal subunit"/>
    <property type="evidence" value="ECO:0007669"/>
    <property type="project" value="TreeGrafter"/>
</dbReference>
<dbReference type="GO" id="GO:0003729">
    <property type="term" value="F:mRNA binding"/>
    <property type="evidence" value="ECO:0007669"/>
    <property type="project" value="UniProtKB-UniRule"/>
</dbReference>
<dbReference type="GO" id="GO:0019843">
    <property type="term" value="F:rRNA binding"/>
    <property type="evidence" value="ECO:0007669"/>
    <property type="project" value="UniProtKB-UniRule"/>
</dbReference>
<dbReference type="GO" id="GO:0003735">
    <property type="term" value="F:structural constituent of ribosome"/>
    <property type="evidence" value="ECO:0007669"/>
    <property type="project" value="InterPro"/>
</dbReference>
<dbReference type="GO" id="GO:0006412">
    <property type="term" value="P:translation"/>
    <property type="evidence" value="ECO:0007669"/>
    <property type="project" value="UniProtKB-UniRule"/>
</dbReference>
<dbReference type="CDD" id="cd02412">
    <property type="entry name" value="KH-II_30S_S3"/>
    <property type="match status" value="1"/>
</dbReference>
<dbReference type="FunFam" id="3.30.300.20:FF:000001">
    <property type="entry name" value="30S ribosomal protein S3"/>
    <property type="match status" value="1"/>
</dbReference>
<dbReference type="Gene3D" id="3.30.300.20">
    <property type="match status" value="1"/>
</dbReference>
<dbReference type="Gene3D" id="3.30.1140.32">
    <property type="entry name" value="Ribosomal protein S3, C-terminal domain"/>
    <property type="match status" value="1"/>
</dbReference>
<dbReference type="HAMAP" id="MF_01309_B">
    <property type="entry name" value="Ribosomal_uS3_B"/>
    <property type="match status" value="1"/>
</dbReference>
<dbReference type="InterPro" id="IPR004087">
    <property type="entry name" value="KH_dom"/>
</dbReference>
<dbReference type="InterPro" id="IPR015946">
    <property type="entry name" value="KH_dom-like_a/b"/>
</dbReference>
<dbReference type="InterPro" id="IPR004044">
    <property type="entry name" value="KH_dom_type_2"/>
</dbReference>
<dbReference type="InterPro" id="IPR009019">
    <property type="entry name" value="KH_sf_prok-type"/>
</dbReference>
<dbReference type="InterPro" id="IPR036419">
    <property type="entry name" value="Ribosomal_S3_C_sf"/>
</dbReference>
<dbReference type="InterPro" id="IPR005704">
    <property type="entry name" value="Ribosomal_uS3_bac-typ"/>
</dbReference>
<dbReference type="InterPro" id="IPR001351">
    <property type="entry name" value="Ribosomal_uS3_C"/>
</dbReference>
<dbReference type="InterPro" id="IPR018280">
    <property type="entry name" value="Ribosomal_uS3_CS"/>
</dbReference>
<dbReference type="NCBIfam" id="TIGR01009">
    <property type="entry name" value="rpsC_bact"/>
    <property type="match status" value="1"/>
</dbReference>
<dbReference type="PANTHER" id="PTHR11760">
    <property type="entry name" value="30S/40S RIBOSOMAL PROTEIN S3"/>
    <property type="match status" value="1"/>
</dbReference>
<dbReference type="PANTHER" id="PTHR11760:SF19">
    <property type="entry name" value="SMALL RIBOSOMAL SUBUNIT PROTEIN US3C"/>
    <property type="match status" value="1"/>
</dbReference>
<dbReference type="Pfam" id="PF07650">
    <property type="entry name" value="KH_2"/>
    <property type="match status" value="1"/>
</dbReference>
<dbReference type="Pfam" id="PF00189">
    <property type="entry name" value="Ribosomal_S3_C"/>
    <property type="match status" value="1"/>
</dbReference>
<dbReference type="SMART" id="SM00322">
    <property type="entry name" value="KH"/>
    <property type="match status" value="1"/>
</dbReference>
<dbReference type="SUPFAM" id="SSF54814">
    <property type="entry name" value="Prokaryotic type KH domain (KH-domain type II)"/>
    <property type="match status" value="1"/>
</dbReference>
<dbReference type="SUPFAM" id="SSF54821">
    <property type="entry name" value="Ribosomal protein S3 C-terminal domain"/>
    <property type="match status" value="1"/>
</dbReference>
<dbReference type="PROSITE" id="PS50823">
    <property type="entry name" value="KH_TYPE_2"/>
    <property type="match status" value="1"/>
</dbReference>
<dbReference type="PROSITE" id="PS00548">
    <property type="entry name" value="RIBOSOMAL_S3"/>
    <property type="match status" value="1"/>
</dbReference>
<feature type="chain" id="PRO_0000293853" description="Small ribosomal subunit protein uS3">
    <location>
        <begin position="1"/>
        <end position="244"/>
    </location>
</feature>
<feature type="domain" description="KH type-2" evidence="1">
    <location>
        <begin position="39"/>
        <end position="110"/>
    </location>
</feature>
<feature type="region of interest" description="Disordered" evidence="2">
    <location>
        <begin position="221"/>
        <end position="244"/>
    </location>
</feature>
<feature type="compositionally biased region" description="Basic and acidic residues" evidence="2">
    <location>
        <begin position="233"/>
        <end position="244"/>
    </location>
</feature>
<comment type="function">
    <text evidence="1">Binds the lower part of the 30S subunit head. Binds mRNA in the 70S ribosome, positioning it for translation.</text>
</comment>
<comment type="subunit">
    <text evidence="1">Part of the 30S ribosomal subunit. Forms a tight complex with proteins S10 and S14.</text>
</comment>
<comment type="similarity">
    <text evidence="1">Belongs to the universal ribosomal protein uS3 family.</text>
</comment>
<evidence type="ECO:0000255" key="1">
    <source>
        <dbReference type="HAMAP-Rule" id="MF_01309"/>
    </source>
</evidence>
<evidence type="ECO:0000256" key="2">
    <source>
        <dbReference type="SAM" id="MobiDB-lite"/>
    </source>
</evidence>
<evidence type="ECO:0000305" key="3"/>
<protein>
    <recommendedName>
        <fullName evidence="1">Small ribosomal subunit protein uS3</fullName>
    </recommendedName>
    <alternativeName>
        <fullName evidence="3">30S ribosomal protein S3</fullName>
    </alternativeName>
</protein>
<gene>
    <name evidence="1" type="primary">rpsC</name>
    <name evidence="1" type="synonym">rps3</name>
    <name type="ordered locus">P9515_17341</name>
</gene>
<organism>
    <name type="scientific">Prochlorococcus marinus (strain MIT 9515)</name>
    <dbReference type="NCBI Taxonomy" id="167542"/>
    <lineage>
        <taxon>Bacteria</taxon>
        <taxon>Bacillati</taxon>
        <taxon>Cyanobacteriota</taxon>
        <taxon>Cyanophyceae</taxon>
        <taxon>Synechococcales</taxon>
        <taxon>Prochlorococcaceae</taxon>
        <taxon>Prochlorococcus</taxon>
    </lineage>
</organism>
<proteinExistence type="inferred from homology"/>
<reference key="1">
    <citation type="journal article" date="2007" name="PLoS Genet.">
        <title>Patterns and implications of gene gain and loss in the evolution of Prochlorococcus.</title>
        <authorList>
            <person name="Kettler G.C."/>
            <person name="Martiny A.C."/>
            <person name="Huang K."/>
            <person name="Zucker J."/>
            <person name="Coleman M.L."/>
            <person name="Rodrigue S."/>
            <person name="Chen F."/>
            <person name="Lapidus A."/>
            <person name="Ferriera S."/>
            <person name="Johnson J."/>
            <person name="Steglich C."/>
            <person name="Church G.M."/>
            <person name="Richardson P."/>
            <person name="Chisholm S.W."/>
        </authorList>
    </citation>
    <scope>NUCLEOTIDE SEQUENCE [LARGE SCALE GENOMIC DNA]</scope>
    <source>
        <strain>MIT 9515</strain>
    </source>
</reference>
<accession>A2BYT0</accession>
<sequence>MGNKINPTGLRLGITQEHRSKWFATSKTYPILLQEDYKIRNFIQKKYSSAGISDVLIARKADQLELELKTARPGVIVGRQGSGIEELRSGIQKTIGDRTRQVRINVVEVERVDADAYLLAEYIAQQLEKRVAFRRTIRMALQRAQRAGVLGLKIQVGGRLNGAEIARSEWTREGRVPLHTLRAEVDYALREANTTYGVLGIKVWVFKGEVLPKEEQTIPVGAIPRRKGSRKPQQFEDRSSNENS</sequence>
<keyword id="KW-0687">Ribonucleoprotein</keyword>
<keyword id="KW-0689">Ribosomal protein</keyword>
<keyword id="KW-0694">RNA-binding</keyword>
<keyword id="KW-0699">rRNA-binding</keyword>